<protein>
    <recommendedName>
        <fullName evidence="1">1D-myo-inositol 2-acetamido-2-deoxy-alpha-D-glucopyranoside deacetylase 3</fullName>
        <shortName evidence="1">GlcNAc-Ins deacetylase 3</shortName>
        <ecNumber evidence="1">3.5.1.103</ecNumber>
    </recommendedName>
    <alternativeName>
        <fullName>N-acetyl-1-D-myo-inositol 2-amino-2-deoxy-alpha-D-glucopyranoside deacetylase 3</fullName>
    </alternativeName>
</protein>
<accession>C7QKE2</accession>
<reference key="1">
    <citation type="journal article" date="2009" name="Stand. Genomic Sci.">
        <title>Complete genome sequence of Catenulispora acidiphila type strain (ID 139908).</title>
        <authorList>
            <person name="Copeland A."/>
            <person name="Lapidus A."/>
            <person name="Glavina Del Rio T."/>
            <person name="Nolan M."/>
            <person name="Lucas S."/>
            <person name="Chen F."/>
            <person name="Tice H."/>
            <person name="Cheng J.F."/>
            <person name="Bruce D."/>
            <person name="Goodwin L."/>
            <person name="Pitluck S."/>
            <person name="Mikhailova N."/>
            <person name="Pati A."/>
            <person name="Ivanova N."/>
            <person name="Mavromatis K."/>
            <person name="Chen A."/>
            <person name="Palaniappan K."/>
            <person name="Chain P."/>
            <person name="Land M."/>
            <person name="Hauser L."/>
            <person name="Chang Y.J."/>
            <person name="Jeffries C.D."/>
            <person name="Chertkov O."/>
            <person name="Brettin T."/>
            <person name="Detter J.C."/>
            <person name="Han C."/>
            <person name="Ali Z."/>
            <person name="Tindall B.J."/>
            <person name="Goker M."/>
            <person name="Bristow J."/>
            <person name="Eisen J.A."/>
            <person name="Markowitz V."/>
            <person name="Hugenholtz P."/>
            <person name="Kyrpides N.C."/>
            <person name="Klenk H.P."/>
        </authorList>
    </citation>
    <scope>NUCLEOTIDE SEQUENCE [LARGE SCALE GENOMIC DNA]</scope>
    <source>
        <strain>DSM 44928 / JCM 14897 / NBRC 102108 / NRRL B-24433 / ID139908</strain>
    </source>
</reference>
<gene>
    <name evidence="1" type="primary">mshB3</name>
    <name type="ordered locus">Caci_6362</name>
</gene>
<evidence type="ECO:0000255" key="1">
    <source>
        <dbReference type="HAMAP-Rule" id="MF_01696"/>
    </source>
</evidence>
<sequence>MTLPLDLLDMPFARLGDRLGNPLRLLMVHAHPDDETTTTGATAALYAAETIDVYLVTCTRGERGEILDPEAQRVVDDAADGEQALGELRVRELAGAVTMLGIKGSRFLGGAGRWWDSGMAGEESNTDPRSLVAGDFQEQVDALAAAIREIRPQVLVTYDSRGGYGHPDHIRAHQLSLAAVDRAAETGGESESGGEGGGEGAEAWSVAKVYAAVVPFSILRSVARRLGSNGDSPFAPLAEALANGVPEDLIEIPYGVPDHLVTAQIDARDWLDAKTAAMRSHRSQMAADSWFFKLAASSDGGFGIEHFQLLRGTAGPLDDGFEADLFAGVRAVDDSDCEPDFGWLPEEEPAGGELF</sequence>
<organism>
    <name type="scientific">Catenulispora acidiphila (strain DSM 44928 / JCM 14897 / NBRC 102108 / NRRL B-24433 / ID139908)</name>
    <dbReference type="NCBI Taxonomy" id="479433"/>
    <lineage>
        <taxon>Bacteria</taxon>
        <taxon>Bacillati</taxon>
        <taxon>Actinomycetota</taxon>
        <taxon>Actinomycetes</taxon>
        <taxon>Catenulisporales</taxon>
        <taxon>Catenulisporaceae</taxon>
        <taxon>Catenulispora</taxon>
    </lineage>
</organism>
<keyword id="KW-0378">Hydrolase</keyword>
<keyword id="KW-0479">Metal-binding</keyword>
<keyword id="KW-1185">Reference proteome</keyword>
<keyword id="KW-0862">Zinc</keyword>
<feature type="chain" id="PRO_0000400175" description="1D-myo-inositol 2-acetamido-2-deoxy-alpha-D-glucopyranoside deacetylase 3">
    <location>
        <begin position="1"/>
        <end position="355"/>
    </location>
</feature>
<feature type="binding site" evidence="1">
    <location>
        <position position="31"/>
    </location>
    <ligand>
        <name>Zn(2+)</name>
        <dbReference type="ChEBI" id="CHEBI:29105"/>
    </ligand>
</feature>
<feature type="binding site" evidence="1">
    <location>
        <position position="34"/>
    </location>
    <ligand>
        <name>Zn(2+)</name>
        <dbReference type="ChEBI" id="CHEBI:29105"/>
    </ligand>
</feature>
<feature type="binding site" evidence="1">
    <location>
        <position position="169"/>
    </location>
    <ligand>
        <name>Zn(2+)</name>
        <dbReference type="ChEBI" id="CHEBI:29105"/>
    </ligand>
</feature>
<name>MSHB3_CATAD</name>
<proteinExistence type="inferred from homology"/>
<comment type="function">
    <text evidence="1">Catalyzes the deacetylation of 1D-myo-inositol 2-acetamido-2-deoxy-alpha-D-glucopyranoside (GlcNAc-Ins) in the mycothiol biosynthesis pathway.</text>
</comment>
<comment type="catalytic activity">
    <reaction evidence="1">
        <text>1D-myo-inositol 2-acetamido-2-deoxy-alpha-D-glucopyranoside + H2O = 1D-myo-inositol 2-amino-2-deoxy-alpha-D-glucopyranoside + acetate</text>
        <dbReference type="Rhea" id="RHEA:26180"/>
        <dbReference type="ChEBI" id="CHEBI:15377"/>
        <dbReference type="ChEBI" id="CHEBI:30089"/>
        <dbReference type="ChEBI" id="CHEBI:52442"/>
        <dbReference type="ChEBI" id="CHEBI:58886"/>
        <dbReference type="EC" id="3.5.1.103"/>
    </reaction>
</comment>
<comment type="cofactor">
    <cofactor evidence="1">
        <name>Zn(2+)</name>
        <dbReference type="ChEBI" id="CHEBI:29105"/>
    </cofactor>
    <text evidence="1">Binds 1 zinc ion per subunit.</text>
</comment>
<comment type="similarity">
    <text evidence="1">Belongs to the MshB deacetylase family.</text>
</comment>
<dbReference type="EC" id="3.5.1.103" evidence="1"/>
<dbReference type="EMBL" id="CP001700">
    <property type="protein sequence ID" value="ACU75216.1"/>
    <property type="molecule type" value="Genomic_DNA"/>
</dbReference>
<dbReference type="RefSeq" id="WP_015794945.1">
    <property type="nucleotide sequence ID" value="NC_013131.1"/>
</dbReference>
<dbReference type="SMR" id="C7QKE2"/>
<dbReference type="STRING" id="479433.Caci_6362"/>
<dbReference type="KEGG" id="cai:Caci_6362"/>
<dbReference type="eggNOG" id="COG2120">
    <property type="taxonomic scope" value="Bacteria"/>
</dbReference>
<dbReference type="HOGENOM" id="CLU_049311_2_1_11"/>
<dbReference type="InParanoid" id="C7QKE2"/>
<dbReference type="Proteomes" id="UP000000851">
    <property type="component" value="Chromosome"/>
</dbReference>
<dbReference type="GO" id="GO:0035595">
    <property type="term" value="F:N-acetylglucosaminylinositol deacetylase activity"/>
    <property type="evidence" value="ECO:0007669"/>
    <property type="project" value="UniProtKB-EC"/>
</dbReference>
<dbReference type="GO" id="GO:0008270">
    <property type="term" value="F:zinc ion binding"/>
    <property type="evidence" value="ECO:0007669"/>
    <property type="project" value="UniProtKB-UniRule"/>
</dbReference>
<dbReference type="GO" id="GO:0010125">
    <property type="term" value="P:mycothiol biosynthetic process"/>
    <property type="evidence" value="ECO:0007669"/>
    <property type="project" value="UniProtKB-UniRule"/>
</dbReference>
<dbReference type="Gene3D" id="3.40.50.10320">
    <property type="entry name" value="LmbE-like"/>
    <property type="match status" value="1"/>
</dbReference>
<dbReference type="HAMAP" id="MF_01696">
    <property type="entry name" value="MshB"/>
    <property type="match status" value="1"/>
</dbReference>
<dbReference type="InterPro" id="IPR003737">
    <property type="entry name" value="GlcNAc_PI_deacetylase-related"/>
</dbReference>
<dbReference type="InterPro" id="IPR024078">
    <property type="entry name" value="LmbE-like_dom_sf"/>
</dbReference>
<dbReference type="InterPro" id="IPR017810">
    <property type="entry name" value="Mycothiol_biosynthesis_MshB"/>
</dbReference>
<dbReference type="NCBIfam" id="TIGR03445">
    <property type="entry name" value="mycothiol_MshB"/>
    <property type="match status" value="1"/>
</dbReference>
<dbReference type="PANTHER" id="PTHR12993:SF26">
    <property type="entry name" value="1D-MYO-INOSITOL 2-ACETAMIDO-2-DEOXY-ALPHA-D-GLUCOPYRANOSIDE DEACETYLASE"/>
    <property type="match status" value="1"/>
</dbReference>
<dbReference type="PANTHER" id="PTHR12993">
    <property type="entry name" value="N-ACETYLGLUCOSAMINYL-PHOSPHATIDYLINOSITOL DE-N-ACETYLASE-RELATED"/>
    <property type="match status" value="1"/>
</dbReference>
<dbReference type="Pfam" id="PF02585">
    <property type="entry name" value="PIG-L"/>
    <property type="match status" value="1"/>
</dbReference>
<dbReference type="SUPFAM" id="SSF102588">
    <property type="entry name" value="LmbE-like"/>
    <property type="match status" value="1"/>
</dbReference>